<accession>P0AB92</accession>
<accession>P00886</accession>
<keyword id="KW-0007">Acetylation</keyword>
<keyword id="KW-0028">Amino-acid biosynthesis</keyword>
<keyword id="KW-0057">Aromatic amino acid biosynthesis</keyword>
<keyword id="KW-1185">Reference proteome</keyword>
<keyword id="KW-0808">Transferase</keyword>
<feature type="chain" id="PRO_0000140836" description="Phospho-2-dehydro-3-deoxyheptonate aldolase, Phe-sensitive">
    <location>
        <begin position="1"/>
        <end position="350"/>
    </location>
</feature>
<feature type="modified residue" description="N6-acetyllysine" evidence="1">
    <location>
        <position position="244"/>
    </location>
</feature>
<reference key="1">
    <citation type="journal article" date="2001" name="Nature">
        <title>Genome sequence of enterohaemorrhagic Escherichia coli O157:H7.</title>
        <authorList>
            <person name="Perna N.T."/>
            <person name="Plunkett G. III"/>
            <person name="Burland V."/>
            <person name="Mau B."/>
            <person name="Glasner J.D."/>
            <person name="Rose D.J."/>
            <person name="Mayhew G.F."/>
            <person name="Evans P.S."/>
            <person name="Gregor J."/>
            <person name="Kirkpatrick H.A."/>
            <person name="Posfai G."/>
            <person name="Hackett J."/>
            <person name="Klink S."/>
            <person name="Boutin A."/>
            <person name="Shao Y."/>
            <person name="Miller L."/>
            <person name="Grotbeck E.J."/>
            <person name="Davis N.W."/>
            <person name="Lim A."/>
            <person name="Dimalanta E.T."/>
            <person name="Potamousis K."/>
            <person name="Apodaca J."/>
            <person name="Anantharaman T.S."/>
            <person name="Lin J."/>
            <person name="Yen G."/>
            <person name="Schwartz D.C."/>
            <person name="Welch R.A."/>
            <person name="Blattner F.R."/>
        </authorList>
    </citation>
    <scope>NUCLEOTIDE SEQUENCE [LARGE SCALE GENOMIC DNA]</scope>
    <source>
        <strain>O157:H7 / EDL933 / ATCC 700927 / EHEC</strain>
    </source>
</reference>
<reference key="2">
    <citation type="journal article" date="2001" name="DNA Res.">
        <title>Complete genome sequence of enterohemorrhagic Escherichia coli O157:H7 and genomic comparison with a laboratory strain K-12.</title>
        <authorList>
            <person name="Hayashi T."/>
            <person name="Makino K."/>
            <person name="Ohnishi M."/>
            <person name="Kurokawa K."/>
            <person name="Ishii K."/>
            <person name="Yokoyama K."/>
            <person name="Han C.-G."/>
            <person name="Ohtsubo E."/>
            <person name="Nakayama K."/>
            <person name="Murata T."/>
            <person name="Tanaka M."/>
            <person name="Tobe T."/>
            <person name="Iida T."/>
            <person name="Takami H."/>
            <person name="Honda T."/>
            <person name="Sasakawa C."/>
            <person name="Ogasawara N."/>
            <person name="Yasunaga T."/>
            <person name="Kuhara S."/>
            <person name="Shiba T."/>
            <person name="Hattori M."/>
            <person name="Shinagawa H."/>
        </authorList>
    </citation>
    <scope>NUCLEOTIDE SEQUENCE [LARGE SCALE GENOMIC DNA]</scope>
    <source>
        <strain>O157:H7 / Sakai / RIMD 0509952 / EHEC</strain>
    </source>
</reference>
<organism>
    <name type="scientific">Escherichia coli O157:H7</name>
    <dbReference type="NCBI Taxonomy" id="83334"/>
    <lineage>
        <taxon>Bacteria</taxon>
        <taxon>Pseudomonadati</taxon>
        <taxon>Pseudomonadota</taxon>
        <taxon>Gammaproteobacteria</taxon>
        <taxon>Enterobacterales</taxon>
        <taxon>Enterobacteriaceae</taxon>
        <taxon>Escherichia</taxon>
    </lineage>
</organism>
<proteinExistence type="inferred from homology"/>
<comment type="function">
    <text evidence="1">Stereospecific condensation of phosphoenolpyruvate (PEP) and D-erythrose-4-phosphate (E4P) giving rise to 3-deoxy-D-arabino-heptulosonate-7-phosphate (DAHP).</text>
</comment>
<comment type="catalytic activity">
    <reaction>
        <text>D-erythrose 4-phosphate + phosphoenolpyruvate + H2O = 7-phospho-2-dehydro-3-deoxy-D-arabino-heptonate + phosphate</text>
        <dbReference type="Rhea" id="RHEA:14717"/>
        <dbReference type="ChEBI" id="CHEBI:15377"/>
        <dbReference type="ChEBI" id="CHEBI:16897"/>
        <dbReference type="ChEBI" id="CHEBI:43474"/>
        <dbReference type="ChEBI" id="CHEBI:58394"/>
        <dbReference type="ChEBI" id="CHEBI:58702"/>
        <dbReference type="EC" id="2.5.1.54"/>
    </reaction>
</comment>
<comment type="pathway">
    <text>Metabolic intermediate biosynthesis; chorismate biosynthesis; chorismate from D-erythrose 4-phosphate and phosphoenolpyruvate: step 1/7.</text>
</comment>
<comment type="subunit">
    <text evidence="1">Homotetramer.</text>
</comment>
<comment type="miscellaneous">
    <text>There are 3 DAHP synthases, AroG is feedback-inhibited by Phe. The other 2 DAHP synthases are Tyr- and Trp-sensitive, respectively.</text>
</comment>
<comment type="similarity">
    <text evidence="2">Belongs to the class-I DAHP synthase family.</text>
</comment>
<protein>
    <recommendedName>
        <fullName>Phospho-2-dehydro-3-deoxyheptonate aldolase, Phe-sensitive</fullName>
        <ecNumber>2.5.1.54</ecNumber>
    </recommendedName>
    <alternativeName>
        <fullName>3-deoxy-D-arabino-heptulosonate 7-phosphate synthase</fullName>
    </alternativeName>
    <alternativeName>
        <fullName>DAHP synthase</fullName>
    </alternativeName>
    <alternativeName>
        <fullName>Phospho-2-keto-3-deoxyheptonate aldolase</fullName>
    </alternativeName>
</protein>
<evidence type="ECO:0000250" key="1"/>
<evidence type="ECO:0000305" key="2"/>
<dbReference type="EC" id="2.5.1.54"/>
<dbReference type="EMBL" id="AE005174">
    <property type="protein sequence ID" value="AAG55083.1"/>
    <property type="molecule type" value="Genomic_DNA"/>
</dbReference>
<dbReference type="EMBL" id="BA000007">
    <property type="protein sequence ID" value="BAB34205.1"/>
    <property type="molecule type" value="Genomic_DNA"/>
</dbReference>
<dbReference type="PIR" id="F90726">
    <property type="entry name" value="F90726"/>
</dbReference>
<dbReference type="PIR" id="G85577">
    <property type="entry name" value="G85577"/>
</dbReference>
<dbReference type="RefSeq" id="NP_308809.1">
    <property type="nucleotide sequence ID" value="NC_002695.1"/>
</dbReference>
<dbReference type="RefSeq" id="WP_001109196.1">
    <property type="nucleotide sequence ID" value="NZ_VOAI01000019.1"/>
</dbReference>
<dbReference type="SMR" id="P0AB92"/>
<dbReference type="STRING" id="155864.Z0924"/>
<dbReference type="GeneID" id="75170753"/>
<dbReference type="GeneID" id="917531"/>
<dbReference type="KEGG" id="ece:Z0924"/>
<dbReference type="KEGG" id="ecs:ECs_0782"/>
<dbReference type="PATRIC" id="fig|386585.9.peg.901"/>
<dbReference type="eggNOG" id="COG0722">
    <property type="taxonomic scope" value="Bacteria"/>
</dbReference>
<dbReference type="HOGENOM" id="CLU_030903_0_1_6"/>
<dbReference type="OMA" id="DINTGLR"/>
<dbReference type="UniPathway" id="UPA00053">
    <property type="reaction ID" value="UER00084"/>
</dbReference>
<dbReference type="Proteomes" id="UP000000558">
    <property type="component" value="Chromosome"/>
</dbReference>
<dbReference type="Proteomes" id="UP000002519">
    <property type="component" value="Chromosome"/>
</dbReference>
<dbReference type="GO" id="GO:0005737">
    <property type="term" value="C:cytoplasm"/>
    <property type="evidence" value="ECO:0007669"/>
    <property type="project" value="TreeGrafter"/>
</dbReference>
<dbReference type="GO" id="GO:0003849">
    <property type="term" value="F:3-deoxy-7-phosphoheptulonate synthase activity"/>
    <property type="evidence" value="ECO:0007669"/>
    <property type="project" value="UniProtKB-EC"/>
</dbReference>
<dbReference type="GO" id="GO:0008652">
    <property type="term" value="P:amino acid biosynthetic process"/>
    <property type="evidence" value="ECO:0007669"/>
    <property type="project" value="UniProtKB-KW"/>
</dbReference>
<dbReference type="GO" id="GO:0009073">
    <property type="term" value="P:aromatic amino acid family biosynthetic process"/>
    <property type="evidence" value="ECO:0007669"/>
    <property type="project" value="UniProtKB-KW"/>
</dbReference>
<dbReference type="GO" id="GO:0009423">
    <property type="term" value="P:chorismate biosynthetic process"/>
    <property type="evidence" value="ECO:0007669"/>
    <property type="project" value="UniProtKB-UniPathway"/>
</dbReference>
<dbReference type="FunFam" id="3.20.20.70:FF:000005">
    <property type="entry name" value="Phospho-2-dehydro-3-deoxyheptonate aldolase"/>
    <property type="match status" value="1"/>
</dbReference>
<dbReference type="Gene3D" id="3.20.20.70">
    <property type="entry name" value="Aldolase class I"/>
    <property type="match status" value="1"/>
</dbReference>
<dbReference type="InterPro" id="IPR013785">
    <property type="entry name" value="Aldolase_TIM"/>
</dbReference>
<dbReference type="InterPro" id="IPR006218">
    <property type="entry name" value="DAHP1/KDSA"/>
</dbReference>
<dbReference type="InterPro" id="IPR006219">
    <property type="entry name" value="DAHP_synth_1"/>
</dbReference>
<dbReference type="NCBIfam" id="TIGR00034">
    <property type="entry name" value="aroFGH"/>
    <property type="match status" value="1"/>
</dbReference>
<dbReference type="NCBIfam" id="NF006723">
    <property type="entry name" value="PRK09261.1-1"/>
    <property type="match status" value="1"/>
</dbReference>
<dbReference type="NCBIfam" id="NF009395">
    <property type="entry name" value="PRK12755.1"/>
    <property type="match status" value="1"/>
</dbReference>
<dbReference type="NCBIfam" id="NF009396">
    <property type="entry name" value="PRK12756.1"/>
    <property type="match status" value="1"/>
</dbReference>
<dbReference type="PANTHER" id="PTHR21225">
    <property type="entry name" value="PHOSPHO-2-DEHYDRO-3-DEOXYHEPTONATE ALDOLASE DAHP SYNTHETASE"/>
    <property type="match status" value="1"/>
</dbReference>
<dbReference type="PANTHER" id="PTHR21225:SF12">
    <property type="entry name" value="PHOSPHO-2-DEHYDRO-3-DEOXYHEPTONATE ALDOLASE, TYROSINE-INHIBITED"/>
    <property type="match status" value="1"/>
</dbReference>
<dbReference type="Pfam" id="PF00793">
    <property type="entry name" value="DAHP_synth_1"/>
    <property type="match status" value="1"/>
</dbReference>
<dbReference type="PIRSF" id="PIRSF001361">
    <property type="entry name" value="DAHP_synthase"/>
    <property type="match status" value="1"/>
</dbReference>
<dbReference type="SUPFAM" id="SSF51569">
    <property type="entry name" value="Aldolase"/>
    <property type="match status" value="1"/>
</dbReference>
<gene>
    <name type="primary">aroG</name>
    <name type="ordered locus">Z0924</name>
    <name type="ordered locus">ECs0782</name>
</gene>
<name>AROG_ECO57</name>
<sequence>MNYQNDDLRIKEIKELLPPVALLEKFPATENAANTVAHARKAIHKILKGNDDRLLVVIGPCSIHDPVAAKEYATRLLALREELKDELEIVMRVYFEKPRTTVGWKGLINDPHMDNSFQINDGLRIARKLLLDINDSGLPAAGEFLDMITPQYLADLMSWGAIGARTTESQVHRELASGLSCPVGFKNGTDGTIKVAIDAINAAGAPHCFLSVTKWGHSAIVNTSGNGDCHIILRGGKEPNYSAKHVAEVKEGLNKAGLPAQVMIDFSHANSSKQFKKQMDVCADVCQQIAGGEKAIIGVMVESHLVEGNQSLESGEPLAYGKSITDACIGWEDTDALLRQLANAVKARRG</sequence>